<dbReference type="EMBL" id="AF490509">
    <property type="protein sequence ID" value="AAM08356.1"/>
    <property type="molecule type" value="mRNA"/>
</dbReference>
<dbReference type="EMBL" id="AK094624">
    <property type="protein sequence ID" value="BAC04387.1"/>
    <property type="molecule type" value="mRNA"/>
</dbReference>
<dbReference type="EMBL" id="AL391495">
    <property type="status" value="NOT_ANNOTATED_CDS"/>
    <property type="molecule type" value="Genomic_DNA"/>
</dbReference>
<dbReference type="EMBL" id="BC093964">
    <property type="protein sequence ID" value="AAH93964.1"/>
    <property type="molecule type" value="mRNA"/>
</dbReference>
<dbReference type="EMBL" id="BC111949">
    <property type="protein sequence ID" value="AAI11950.1"/>
    <property type="molecule type" value="mRNA"/>
</dbReference>
<dbReference type="CCDS" id="CCDS14431.1"/>
<dbReference type="RefSeq" id="NP_619648.1">
    <property type="nucleotide sequence ID" value="NM_138703.5"/>
</dbReference>
<dbReference type="SMR" id="Q8TD90"/>
<dbReference type="BioGRID" id="126577">
    <property type="interactions" value="43"/>
</dbReference>
<dbReference type="FunCoup" id="Q8TD90">
    <property type="interactions" value="27"/>
</dbReference>
<dbReference type="IntAct" id="Q8TD90">
    <property type="interactions" value="5"/>
</dbReference>
<dbReference type="MINT" id="Q8TD90"/>
<dbReference type="STRING" id="9606.ENSP00000362457"/>
<dbReference type="BioMuta" id="MAGEE2"/>
<dbReference type="jPOST" id="Q8TD90"/>
<dbReference type="PaxDb" id="9606-ENSP00000362457"/>
<dbReference type="PeptideAtlas" id="Q8TD90"/>
<dbReference type="ProteomicsDB" id="74251"/>
<dbReference type="Antibodypedia" id="28084">
    <property type="antibodies" value="74 antibodies from 20 providers"/>
</dbReference>
<dbReference type="DNASU" id="139599"/>
<dbReference type="Ensembl" id="ENST00000373359.4">
    <property type="protein sequence ID" value="ENSP00000362457.2"/>
    <property type="gene ID" value="ENSG00000186675.7"/>
</dbReference>
<dbReference type="GeneID" id="139599"/>
<dbReference type="KEGG" id="hsa:139599"/>
<dbReference type="MANE-Select" id="ENST00000373359.4">
    <property type="protein sequence ID" value="ENSP00000362457.2"/>
    <property type="RefSeq nucleotide sequence ID" value="NM_138703.5"/>
    <property type="RefSeq protein sequence ID" value="NP_619648.1"/>
</dbReference>
<dbReference type="UCSC" id="uc004ecj.3">
    <property type="organism name" value="human"/>
</dbReference>
<dbReference type="AGR" id="HGNC:24935"/>
<dbReference type="CTD" id="139599"/>
<dbReference type="DisGeNET" id="139599"/>
<dbReference type="GeneCards" id="MAGEE2"/>
<dbReference type="HGNC" id="HGNC:24935">
    <property type="gene designation" value="MAGEE2"/>
</dbReference>
<dbReference type="HPA" id="ENSG00000186675">
    <property type="expression patterns" value="Tissue enhanced (brain)"/>
</dbReference>
<dbReference type="MIM" id="300760">
    <property type="type" value="gene"/>
</dbReference>
<dbReference type="neXtProt" id="NX_Q8TD90"/>
<dbReference type="OpenTargets" id="ENSG00000186675"/>
<dbReference type="PharmGKB" id="PA134923697"/>
<dbReference type="VEuPathDB" id="HostDB:ENSG00000186675"/>
<dbReference type="eggNOG" id="KOG4562">
    <property type="taxonomic scope" value="Eukaryota"/>
</dbReference>
<dbReference type="GeneTree" id="ENSGT00940000163487"/>
<dbReference type="HOGENOM" id="CLU_039515_0_0_1"/>
<dbReference type="InParanoid" id="Q8TD90"/>
<dbReference type="OMA" id="TAGLEFW"/>
<dbReference type="OrthoDB" id="205198at2759"/>
<dbReference type="PAN-GO" id="Q8TD90">
    <property type="GO annotations" value="2 GO annotations based on evolutionary models"/>
</dbReference>
<dbReference type="PhylomeDB" id="Q8TD90"/>
<dbReference type="TreeFam" id="TF328505"/>
<dbReference type="PathwayCommons" id="Q8TD90"/>
<dbReference type="SignaLink" id="Q8TD90"/>
<dbReference type="BioGRID-ORCS" id="139599">
    <property type="hits" value="4 hits in 755 CRISPR screens"/>
</dbReference>
<dbReference type="GenomeRNAi" id="139599"/>
<dbReference type="Pharos" id="Q8TD90">
    <property type="development level" value="Tdark"/>
</dbReference>
<dbReference type="PRO" id="PR:Q8TD90"/>
<dbReference type="Proteomes" id="UP000005640">
    <property type="component" value="Chromosome X"/>
</dbReference>
<dbReference type="RNAct" id="Q8TD90">
    <property type="molecule type" value="protein"/>
</dbReference>
<dbReference type="Bgee" id="ENSG00000186675">
    <property type="expression patterns" value="Expressed in endothelial cell and 72 other cell types or tissues"/>
</dbReference>
<dbReference type="GO" id="GO:0005634">
    <property type="term" value="C:nucleus"/>
    <property type="evidence" value="ECO:0000318"/>
    <property type="project" value="GO_Central"/>
</dbReference>
<dbReference type="GO" id="GO:0000122">
    <property type="term" value="P:negative regulation of transcription by RNA polymerase II"/>
    <property type="evidence" value="ECO:0000318"/>
    <property type="project" value="GO_Central"/>
</dbReference>
<dbReference type="FunFam" id="1.10.10.1210:FF:000001">
    <property type="entry name" value="melanoma-associated antigen D1"/>
    <property type="match status" value="2"/>
</dbReference>
<dbReference type="Gene3D" id="1.10.10.1200">
    <property type="entry name" value="MAGE homology domain, winged helix WH1 motif"/>
    <property type="match status" value="2"/>
</dbReference>
<dbReference type="Gene3D" id="1.10.10.1210">
    <property type="entry name" value="MAGE homology domain, winged helix WH2 motif"/>
    <property type="match status" value="2"/>
</dbReference>
<dbReference type="InterPro" id="IPR037445">
    <property type="entry name" value="MAGE"/>
</dbReference>
<dbReference type="InterPro" id="IPR041898">
    <property type="entry name" value="MAGE_WH1"/>
</dbReference>
<dbReference type="InterPro" id="IPR041899">
    <property type="entry name" value="MAGE_WH2"/>
</dbReference>
<dbReference type="InterPro" id="IPR002190">
    <property type="entry name" value="MHD_dom"/>
</dbReference>
<dbReference type="PANTHER" id="PTHR11736:SF7">
    <property type="entry name" value="MELANOMA-ASSOCIATED ANTIGEN E2"/>
    <property type="match status" value="1"/>
</dbReference>
<dbReference type="PANTHER" id="PTHR11736">
    <property type="entry name" value="MELANOMA-ASSOCIATED ANTIGEN MAGE ANTIGEN"/>
    <property type="match status" value="1"/>
</dbReference>
<dbReference type="Pfam" id="PF01454">
    <property type="entry name" value="MAGE"/>
    <property type="match status" value="1"/>
</dbReference>
<dbReference type="SMART" id="SM01373">
    <property type="entry name" value="MAGE"/>
    <property type="match status" value="2"/>
</dbReference>
<dbReference type="PROSITE" id="PS50838">
    <property type="entry name" value="MAGE"/>
    <property type="match status" value="2"/>
</dbReference>
<gene>
    <name type="primary">MAGEE2</name>
    <name type="synonym">HCA3</name>
</gene>
<reference key="1">
    <citation type="submission" date="2002-03" db="EMBL/GenBank/DDBJ databases">
        <title>Identification of genes in the chromosome X that are differentially expressed in hepatocellular carcinoma.</title>
        <authorList>
            <person name="Dong X.-Y."/>
            <person name="Chen W.-F."/>
        </authorList>
    </citation>
    <scope>NUCLEOTIDE SEQUENCE [MRNA]</scope>
</reference>
<reference key="2">
    <citation type="journal article" date="2004" name="Nat. Genet.">
        <title>Complete sequencing and characterization of 21,243 full-length human cDNAs.</title>
        <authorList>
            <person name="Ota T."/>
            <person name="Suzuki Y."/>
            <person name="Nishikawa T."/>
            <person name="Otsuki T."/>
            <person name="Sugiyama T."/>
            <person name="Irie R."/>
            <person name="Wakamatsu A."/>
            <person name="Hayashi K."/>
            <person name="Sato H."/>
            <person name="Nagai K."/>
            <person name="Kimura K."/>
            <person name="Makita H."/>
            <person name="Sekine M."/>
            <person name="Obayashi M."/>
            <person name="Nishi T."/>
            <person name="Shibahara T."/>
            <person name="Tanaka T."/>
            <person name="Ishii S."/>
            <person name="Yamamoto J."/>
            <person name="Saito K."/>
            <person name="Kawai Y."/>
            <person name="Isono Y."/>
            <person name="Nakamura Y."/>
            <person name="Nagahari K."/>
            <person name="Murakami K."/>
            <person name="Yasuda T."/>
            <person name="Iwayanagi T."/>
            <person name="Wagatsuma M."/>
            <person name="Shiratori A."/>
            <person name="Sudo H."/>
            <person name="Hosoiri T."/>
            <person name="Kaku Y."/>
            <person name="Kodaira H."/>
            <person name="Kondo H."/>
            <person name="Sugawara M."/>
            <person name="Takahashi M."/>
            <person name="Kanda K."/>
            <person name="Yokoi T."/>
            <person name="Furuya T."/>
            <person name="Kikkawa E."/>
            <person name="Omura Y."/>
            <person name="Abe K."/>
            <person name="Kamihara K."/>
            <person name="Katsuta N."/>
            <person name="Sato K."/>
            <person name="Tanikawa M."/>
            <person name="Yamazaki M."/>
            <person name="Ninomiya K."/>
            <person name="Ishibashi T."/>
            <person name="Yamashita H."/>
            <person name="Murakawa K."/>
            <person name="Fujimori K."/>
            <person name="Tanai H."/>
            <person name="Kimata M."/>
            <person name="Watanabe M."/>
            <person name="Hiraoka S."/>
            <person name="Chiba Y."/>
            <person name="Ishida S."/>
            <person name="Ono Y."/>
            <person name="Takiguchi S."/>
            <person name="Watanabe S."/>
            <person name="Yosida M."/>
            <person name="Hotuta T."/>
            <person name="Kusano J."/>
            <person name="Kanehori K."/>
            <person name="Takahashi-Fujii A."/>
            <person name="Hara H."/>
            <person name="Tanase T.-O."/>
            <person name="Nomura Y."/>
            <person name="Togiya S."/>
            <person name="Komai F."/>
            <person name="Hara R."/>
            <person name="Takeuchi K."/>
            <person name="Arita M."/>
            <person name="Imose N."/>
            <person name="Musashino K."/>
            <person name="Yuuki H."/>
            <person name="Oshima A."/>
            <person name="Sasaki N."/>
            <person name="Aotsuka S."/>
            <person name="Yoshikawa Y."/>
            <person name="Matsunawa H."/>
            <person name="Ichihara T."/>
            <person name="Shiohata N."/>
            <person name="Sano S."/>
            <person name="Moriya S."/>
            <person name="Momiyama H."/>
            <person name="Satoh N."/>
            <person name="Takami S."/>
            <person name="Terashima Y."/>
            <person name="Suzuki O."/>
            <person name="Nakagawa S."/>
            <person name="Senoh A."/>
            <person name="Mizoguchi H."/>
            <person name="Goto Y."/>
            <person name="Shimizu F."/>
            <person name="Wakebe H."/>
            <person name="Hishigaki H."/>
            <person name="Watanabe T."/>
            <person name="Sugiyama A."/>
            <person name="Takemoto M."/>
            <person name="Kawakami B."/>
            <person name="Yamazaki M."/>
            <person name="Watanabe K."/>
            <person name="Kumagai A."/>
            <person name="Itakura S."/>
            <person name="Fukuzumi Y."/>
            <person name="Fujimori Y."/>
            <person name="Komiyama M."/>
            <person name="Tashiro H."/>
            <person name="Tanigami A."/>
            <person name="Fujiwara T."/>
            <person name="Ono T."/>
            <person name="Yamada K."/>
            <person name="Fujii Y."/>
            <person name="Ozaki K."/>
            <person name="Hirao M."/>
            <person name="Ohmori Y."/>
            <person name="Kawabata A."/>
            <person name="Hikiji T."/>
            <person name="Kobatake N."/>
            <person name="Inagaki H."/>
            <person name="Ikema Y."/>
            <person name="Okamoto S."/>
            <person name="Okitani R."/>
            <person name="Kawakami T."/>
            <person name="Noguchi S."/>
            <person name="Itoh T."/>
            <person name="Shigeta K."/>
            <person name="Senba T."/>
            <person name="Matsumura K."/>
            <person name="Nakajima Y."/>
            <person name="Mizuno T."/>
            <person name="Morinaga M."/>
            <person name="Sasaki M."/>
            <person name="Togashi T."/>
            <person name="Oyama M."/>
            <person name="Hata H."/>
            <person name="Watanabe M."/>
            <person name="Komatsu T."/>
            <person name="Mizushima-Sugano J."/>
            <person name="Satoh T."/>
            <person name="Shirai Y."/>
            <person name="Takahashi Y."/>
            <person name="Nakagawa K."/>
            <person name="Okumura K."/>
            <person name="Nagase T."/>
            <person name="Nomura N."/>
            <person name="Kikuchi H."/>
            <person name="Masuho Y."/>
            <person name="Yamashita R."/>
            <person name="Nakai K."/>
            <person name="Yada T."/>
            <person name="Nakamura Y."/>
            <person name="Ohara O."/>
            <person name="Isogai T."/>
            <person name="Sugano S."/>
        </authorList>
    </citation>
    <scope>NUCLEOTIDE SEQUENCE [LARGE SCALE MRNA]</scope>
    <source>
        <tissue>Amygdala</tissue>
    </source>
</reference>
<reference key="3">
    <citation type="journal article" date="2005" name="Nature">
        <title>The DNA sequence of the human X chromosome.</title>
        <authorList>
            <person name="Ross M.T."/>
            <person name="Grafham D.V."/>
            <person name="Coffey A.J."/>
            <person name="Scherer S."/>
            <person name="McLay K."/>
            <person name="Muzny D."/>
            <person name="Platzer M."/>
            <person name="Howell G.R."/>
            <person name="Burrows C."/>
            <person name="Bird C.P."/>
            <person name="Frankish A."/>
            <person name="Lovell F.L."/>
            <person name="Howe K.L."/>
            <person name="Ashurst J.L."/>
            <person name="Fulton R.S."/>
            <person name="Sudbrak R."/>
            <person name="Wen G."/>
            <person name="Jones M.C."/>
            <person name="Hurles M.E."/>
            <person name="Andrews T.D."/>
            <person name="Scott C.E."/>
            <person name="Searle S."/>
            <person name="Ramser J."/>
            <person name="Whittaker A."/>
            <person name="Deadman R."/>
            <person name="Carter N.P."/>
            <person name="Hunt S.E."/>
            <person name="Chen R."/>
            <person name="Cree A."/>
            <person name="Gunaratne P."/>
            <person name="Havlak P."/>
            <person name="Hodgson A."/>
            <person name="Metzker M.L."/>
            <person name="Richards S."/>
            <person name="Scott G."/>
            <person name="Steffen D."/>
            <person name="Sodergren E."/>
            <person name="Wheeler D.A."/>
            <person name="Worley K.C."/>
            <person name="Ainscough R."/>
            <person name="Ambrose K.D."/>
            <person name="Ansari-Lari M.A."/>
            <person name="Aradhya S."/>
            <person name="Ashwell R.I."/>
            <person name="Babbage A.K."/>
            <person name="Bagguley C.L."/>
            <person name="Ballabio A."/>
            <person name="Banerjee R."/>
            <person name="Barker G.E."/>
            <person name="Barlow K.F."/>
            <person name="Barrett I.P."/>
            <person name="Bates K.N."/>
            <person name="Beare D.M."/>
            <person name="Beasley H."/>
            <person name="Beasley O."/>
            <person name="Beck A."/>
            <person name="Bethel G."/>
            <person name="Blechschmidt K."/>
            <person name="Brady N."/>
            <person name="Bray-Allen S."/>
            <person name="Bridgeman A.M."/>
            <person name="Brown A.J."/>
            <person name="Brown M.J."/>
            <person name="Bonnin D."/>
            <person name="Bruford E.A."/>
            <person name="Buhay C."/>
            <person name="Burch P."/>
            <person name="Burford D."/>
            <person name="Burgess J."/>
            <person name="Burrill W."/>
            <person name="Burton J."/>
            <person name="Bye J.M."/>
            <person name="Carder C."/>
            <person name="Carrel L."/>
            <person name="Chako J."/>
            <person name="Chapman J.C."/>
            <person name="Chavez D."/>
            <person name="Chen E."/>
            <person name="Chen G."/>
            <person name="Chen Y."/>
            <person name="Chen Z."/>
            <person name="Chinault C."/>
            <person name="Ciccodicola A."/>
            <person name="Clark S.Y."/>
            <person name="Clarke G."/>
            <person name="Clee C.M."/>
            <person name="Clegg S."/>
            <person name="Clerc-Blankenburg K."/>
            <person name="Clifford K."/>
            <person name="Cobley V."/>
            <person name="Cole C.G."/>
            <person name="Conquer J.S."/>
            <person name="Corby N."/>
            <person name="Connor R.E."/>
            <person name="David R."/>
            <person name="Davies J."/>
            <person name="Davis C."/>
            <person name="Davis J."/>
            <person name="Delgado O."/>
            <person name="Deshazo D."/>
            <person name="Dhami P."/>
            <person name="Ding Y."/>
            <person name="Dinh H."/>
            <person name="Dodsworth S."/>
            <person name="Draper H."/>
            <person name="Dugan-Rocha S."/>
            <person name="Dunham A."/>
            <person name="Dunn M."/>
            <person name="Durbin K.J."/>
            <person name="Dutta I."/>
            <person name="Eades T."/>
            <person name="Ellwood M."/>
            <person name="Emery-Cohen A."/>
            <person name="Errington H."/>
            <person name="Evans K.L."/>
            <person name="Faulkner L."/>
            <person name="Francis F."/>
            <person name="Frankland J."/>
            <person name="Fraser A.E."/>
            <person name="Galgoczy P."/>
            <person name="Gilbert J."/>
            <person name="Gill R."/>
            <person name="Gloeckner G."/>
            <person name="Gregory S.G."/>
            <person name="Gribble S."/>
            <person name="Griffiths C."/>
            <person name="Grocock R."/>
            <person name="Gu Y."/>
            <person name="Gwilliam R."/>
            <person name="Hamilton C."/>
            <person name="Hart E.A."/>
            <person name="Hawes A."/>
            <person name="Heath P.D."/>
            <person name="Heitmann K."/>
            <person name="Hennig S."/>
            <person name="Hernandez J."/>
            <person name="Hinzmann B."/>
            <person name="Ho S."/>
            <person name="Hoffs M."/>
            <person name="Howden P.J."/>
            <person name="Huckle E.J."/>
            <person name="Hume J."/>
            <person name="Hunt P.J."/>
            <person name="Hunt A.R."/>
            <person name="Isherwood J."/>
            <person name="Jacob L."/>
            <person name="Johnson D."/>
            <person name="Jones S."/>
            <person name="de Jong P.J."/>
            <person name="Joseph S.S."/>
            <person name="Keenan S."/>
            <person name="Kelly S."/>
            <person name="Kershaw J.K."/>
            <person name="Khan Z."/>
            <person name="Kioschis P."/>
            <person name="Klages S."/>
            <person name="Knights A.J."/>
            <person name="Kosiura A."/>
            <person name="Kovar-Smith C."/>
            <person name="Laird G.K."/>
            <person name="Langford C."/>
            <person name="Lawlor S."/>
            <person name="Leversha M."/>
            <person name="Lewis L."/>
            <person name="Liu W."/>
            <person name="Lloyd C."/>
            <person name="Lloyd D.M."/>
            <person name="Loulseged H."/>
            <person name="Loveland J.E."/>
            <person name="Lovell J.D."/>
            <person name="Lozado R."/>
            <person name="Lu J."/>
            <person name="Lyne R."/>
            <person name="Ma J."/>
            <person name="Maheshwari M."/>
            <person name="Matthews L.H."/>
            <person name="McDowall J."/>
            <person name="McLaren S."/>
            <person name="McMurray A."/>
            <person name="Meidl P."/>
            <person name="Meitinger T."/>
            <person name="Milne S."/>
            <person name="Miner G."/>
            <person name="Mistry S.L."/>
            <person name="Morgan M."/>
            <person name="Morris S."/>
            <person name="Mueller I."/>
            <person name="Mullikin J.C."/>
            <person name="Nguyen N."/>
            <person name="Nordsiek G."/>
            <person name="Nyakatura G."/>
            <person name="O'dell C.N."/>
            <person name="Okwuonu G."/>
            <person name="Palmer S."/>
            <person name="Pandian R."/>
            <person name="Parker D."/>
            <person name="Parrish J."/>
            <person name="Pasternak S."/>
            <person name="Patel D."/>
            <person name="Pearce A.V."/>
            <person name="Pearson D.M."/>
            <person name="Pelan S.E."/>
            <person name="Perez L."/>
            <person name="Porter K.M."/>
            <person name="Ramsey Y."/>
            <person name="Reichwald K."/>
            <person name="Rhodes S."/>
            <person name="Ridler K.A."/>
            <person name="Schlessinger D."/>
            <person name="Schueler M.G."/>
            <person name="Sehra H.K."/>
            <person name="Shaw-Smith C."/>
            <person name="Shen H."/>
            <person name="Sheridan E.M."/>
            <person name="Shownkeen R."/>
            <person name="Skuce C.D."/>
            <person name="Smith M.L."/>
            <person name="Sotheran E.C."/>
            <person name="Steingruber H.E."/>
            <person name="Steward C.A."/>
            <person name="Storey R."/>
            <person name="Swann R.M."/>
            <person name="Swarbreck D."/>
            <person name="Tabor P.E."/>
            <person name="Taudien S."/>
            <person name="Taylor T."/>
            <person name="Teague B."/>
            <person name="Thomas K."/>
            <person name="Thorpe A."/>
            <person name="Timms K."/>
            <person name="Tracey A."/>
            <person name="Trevanion S."/>
            <person name="Tromans A.C."/>
            <person name="d'Urso M."/>
            <person name="Verduzco D."/>
            <person name="Villasana D."/>
            <person name="Waldron L."/>
            <person name="Wall M."/>
            <person name="Wang Q."/>
            <person name="Warren J."/>
            <person name="Warry G.L."/>
            <person name="Wei X."/>
            <person name="West A."/>
            <person name="Whitehead S.L."/>
            <person name="Whiteley M.N."/>
            <person name="Wilkinson J.E."/>
            <person name="Willey D.L."/>
            <person name="Williams G."/>
            <person name="Williams L."/>
            <person name="Williamson A."/>
            <person name="Williamson H."/>
            <person name="Wilming L."/>
            <person name="Woodmansey R.L."/>
            <person name="Wray P.W."/>
            <person name="Yen J."/>
            <person name="Zhang J."/>
            <person name="Zhou J."/>
            <person name="Zoghbi H."/>
            <person name="Zorilla S."/>
            <person name="Buck D."/>
            <person name="Reinhardt R."/>
            <person name="Poustka A."/>
            <person name="Rosenthal A."/>
            <person name="Lehrach H."/>
            <person name="Meindl A."/>
            <person name="Minx P.J."/>
            <person name="Hillier L.W."/>
            <person name="Willard H.F."/>
            <person name="Wilson R.K."/>
            <person name="Waterston R.H."/>
            <person name="Rice C.M."/>
            <person name="Vaudin M."/>
            <person name="Coulson A."/>
            <person name="Nelson D.L."/>
            <person name="Weinstock G."/>
            <person name="Sulston J.E."/>
            <person name="Durbin R.M."/>
            <person name="Hubbard T."/>
            <person name="Gibbs R.A."/>
            <person name="Beck S."/>
            <person name="Rogers J."/>
            <person name="Bentley D.R."/>
        </authorList>
    </citation>
    <scope>NUCLEOTIDE SEQUENCE [LARGE SCALE GENOMIC DNA]</scope>
</reference>
<reference key="4">
    <citation type="journal article" date="2004" name="Genome Res.">
        <title>The status, quality, and expansion of the NIH full-length cDNA project: the Mammalian Gene Collection (MGC).</title>
        <authorList>
            <consortium name="The MGC Project Team"/>
        </authorList>
    </citation>
    <scope>NUCLEOTIDE SEQUENCE [LARGE SCALE MRNA]</scope>
    <source>
        <tissue>Brain</tissue>
    </source>
</reference>
<protein>
    <recommendedName>
        <fullName>Melanoma-associated antigen E2</fullName>
    </recommendedName>
    <alternativeName>
        <fullName>Hepatocellular carcinoma-associated protein 3</fullName>
    </alternativeName>
    <alternativeName>
        <fullName>MAGE-E2 antigen</fullName>
    </alternativeName>
</protein>
<proteinExistence type="evidence at protein level"/>
<keyword id="KW-1185">Reference proteome</keyword>
<keyword id="KW-0677">Repeat</keyword>
<keyword id="KW-0825">Tumor antigen</keyword>
<name>MAGE2_HUMAN</name>
<accession>Q8TD90</accession>
<accession>Q5JSI5</accession>
<organism>
    <name type="scientific">Homo sapiens</name>
    <name type="common">Human</name>
    <dbReference type="NCBI Taxonomy" id="9606"/>
    <lineage>
        <taxon>Eukaryota</taxon>
        <taxon>Metazoa</taxon>
        <taxon>Chordata</taxon>
        <taxon>Craniata</taxon>
        <taxon>Vertebrata</taxon>
        <taxon>Euteleostomi</taxon>
        <taxon>Mammalia</taxon>
        <taxon>Eutheria</taxon>
        <taxon>Euarchontoglires</taxon>
        <taxon>Primates</taxon>
        <taxon>Haplorrhini</taxon>
        <taxon>Catarrhini</taxon>
        <taxon>Hominidae</taxon>
        <taxon>Homo</taxon>
    </lineage>
</organism>
<sequence>MSLVSQNARHCSAEITADYGDGRGEIQATNASGSPTSMLVVDAPQCPQAPINSQCVNTSQAVQDPNDLEVLIDEQSRRLGALRVHDPLEDRSIALVNFMRMKSQTEGSIQQSEMLEFLREYSDQFPEILRRASAHLDQVFGLNLRVIDPQADTYNLVSKRGFQITDRIAESLDMPKASLLALVLGHILLNGNRAREASIWDLLLKVDMWDKPQRINNLFGNTRNLLTTDFVCMRFLEYWPVYGTNPLEFEFLWGSRAHREITKMEALKFVSDAHDEEPWSWPEEYNKALEGDKTKERSLTAGLEFWSEDTMNDKANDLVQLAISVTEEMLPIHQDELLAHTGKEFEDVFPNILNRATLILDMFYGLSLIEVDTSEHIYLLVQQPESEEEQVMLESLGRPTQEYVMPILGLIFLMGNRVKEANVWNLLRRFSVDVGRKHSITRKLMRQRYLECRPLSYSNPVEYELLWGPRAHHETIKMKVLEYMARLYRKRPQNWPEQYREAVEDEEARAKSEATIMFFLDPT</sequence>
<evidence type="ECO:0000255" key="1">
    <source>
        <dbReference type="PROSITE-ProRule" id="PRU00127"/>
    </source>
</evidence>
<feature type="chain" id="PRO_0000156731" description="Melanoma-associated antigen E2">
    <location>
        <begin position="1"/>
        <end position="523"/>
    </location>
</feature>
<feature type="domain" description="MAGE 1" evidence="1">
    <location>
        <begin position="88"/>
        <end position="288"/>
    </location>
</feature>
<feature type="domain" description="MAGE 2" evidence="1">
    <location>
        <begin position="311"/>
        <end position="502"/>
    </location>
</feature>
<feature type="sequence variant" id="VAR_053509" description="In dbSNP:rs12688600.">
    <original>G</original>
    <variation>C</variation>
    <location>
        <position position="291"/>
    </location>
</feature>
<comment type="interaction">
    <interactant intactId="EBI-7954026">
        <id>Q8TD90</id>
    </interactant>
    <interactant intactId="EBI-2514233">
        <id>Q9Y4X5</id>
        <label>ARIH1</label>
    </interactant>
    <organismsDiffer>false</organismsDiffer>
    <experiments>2</experiments>
</comment>